<accession>P15683</accession>
<organismHost>
    <name type="scientific">Aves</name>
    <dbReference type="NCBI Taxonomy" id="8782"/>
</organismHost>
<organismHost>
    <name type="scientific">Cetacea</name>
    <name type="common">whales</name>
    <dbReference type="NCBI Taxonomy" id="9721"/>
</organismHost>
<protein>
    <recommendedName>
        <fullName evidence="1">Nucleoprotein</fullName>
    </recommendedName>
    <alternativeName>
        <fullName evidence="1">Nucleocapsid protein</fullName>
        <shortName evidence="1">Protein N</shortName>
    </alternativeName>
</protein>
<name>NCAP_I84A2</name>
<evidence type="ECO:0000255" key="1">
    <source>
        <dbReference type="HAMAP-Rule" id="MF_04070"/>
    </source>
</evidence>
<evidence type="ECO:0000256" key="2">
    <source>
        <dbReference type="SAM" id="MobiDB-lite"/>
    </source>
</evidence>
<feature type="chain" id="PRO_0000079111" description="Nucleoprotein">
    <location>
        <begin position="1"/>
        <end position="498"/>
    </location>
</feature>
<feature type="region of interest" description="Disordered" evidence="2">
    <location>
        <begin position="1"/>
        <end position="22"/>
    </location>
</feature>
<feature type="short sequence motif" description="Unconventional nuclear localization signal" evidence="1">
    <location>
        <begin position="1"/>
        <end position="18"/>
    </location>
</feature>
<feature type="short sequence motif" description="Bipartite nuclear localization signal" evidence="1">
    <location>
        <begin position="198"/>
        <end position="216"/>
    </location>
</feature>
<comment type="function">
    <text evidence="1">Encapsidates the negative strand viral RNA, protecting it from nucleases. The encapsidated genomic RNA is termed the ribonucleoprotein (RNP) and serves as template for transcription and replication. The RNP needs to be localized in the host nucleus to start an infectious cycle, but is too large to diffuse through the nuclear pore complex. NP comprises at least 2 nuclear localization signals that are responsible for the active RNP import into the nucleus through cellular importin alpha/beta pathway. Later in the infection, nclear export of RNPs are mediated through viral proteins NEP interacting with M1 which binds nucleoproteins. It is possible that nucleoprotein binds directly host exportin-1/XPO1 and plays an active role in RNPs nuclear export. M1 interaction with RNP seems to hide nucleoprotein's nuclear localization signals. Soon after a virion infects a new cell, M1 dissociates from the RNP under acidification of the virion driven by M2 protein. Dissociation of M1 from RNP unmasks nucleoprotein's nuclear localization signals, targeting the RNP to the nucleus.</text>
</comment>
<comment type="subunit">
    <text evidence="1">Homomultimerizes to form the nucleocapsid. May bind host exportin-1/XPO1. Binds to viral genomic RNA. Protein-RNA contacts are mediated by a combination of electrostatic interactions between positively charged residues and the phosphate backbone and planar interactions between aromatic side chains and bases.</text>
</comment>
<comment type="subcellular location">
    <subcellularLocation>
        <location evidence="1">Virion</location>
    </subcellularLocation>
    <subcellularLocation>
        <location evidence="1">Host nucleus</location>
    </subcellularLocation>
</comment>
<comment type="PTM">
    <text evidence="1">Late in virus-infected cells, may be cleaved from a 56-kDa protein to a 53-kDa protein by a cellular caspase. This cleavage might be a marker for the onset of apoptosis in infected cells or have a specific function in virus host interaction.</text>
</comment>
<comment type="similarity">
    <text evidence="1">Belongs to the influenza viruses nucleoprotein family.</text>
</comment>
<organism>
    <name type="scientific">Influenza A virus (strain A/Whale/Maine/328/1984 H13N2)</name>
    <dbReference type="NCBI Taxonomy" id="385593"/>
    <lineage>
        <taxon>Viruses</taxon>
        <taxon>Riboviria</taxon>
        <taxon>Orthornavirae</taxon>
        <taxon>Negarnaviricota</taxon>
        <taxon>Polyploviricotina</taxon>
        <taxon>Insthoviricetes</taxon>
        <taxon>Articulavirales</taxon>
        <taxon>Orthomyxoviridae</taxon>
        <taxon>Alphainfluenzavirus</taxon>
        <taxon>Alphainfluenzavirus influenzae</taxon>
        <taxon>Influenza A virus</taxon>
    </lineage>
</organism>
<dbReference type="EMBL" id="M27520">
    <property type="protein sequence ID" value="AAA43480.1"/>
    <property type="molecule type" value="Genomic_RNA"/>
</dbReference>
<dbReference type="SMR" id="P15683"/>
<dbReference type="GO" id="GO:0019029">
    <property type="term" value="C:helical viral capsid"/>
    <property type="evidence" value="ECO:0007669"/>
    <property type="project" value="UniProtKB-UniRule"/>
</dbReference>
<dbReference type="GO" id="GO:0043657">
    <property type="term" value="C:host cell"/>
    <property type="evidence" value="ECO:0007669"/>
    <property type="project" value="GOC"/>
</dbReference>
<dbReference type="GO" id="GO:0042025">
    <property type="term" value="C:host cell nucleus"/>
    <property type="evidence" value="ECO:0007669"/>
    <property type="project" value="UniProtKB-SubCell"/>
</dbReference>
<dbReference type="GO" id="GO:1990904">
    <property type="term" value="C:ribonucleoprotein complex"/>
    <property type="evidence" value="ECO:0007669"/>
    <property type="project" value="UniProtKB-KW"/>
</dbReference>
<dbReference type="GO" id="GO:0019013">
    <property type="term" value="C:viral nucleocapsid"/>
    <property type="evidence" value="ECO:0007669"/>
    <property type="project" value="UniProtKB-UniRule"/>
</dbReference>
<dbReference type="GO" id="GO:0003723">
    <property type="term" value="F:RNA binding"/>
    <property type="evidence" value="ECO:0007669"/>
    <property type="project" value="UniProtKB-UniRule"/>
</dbReference>
<dbReference type="GO" id="GO:0005198">
    <property type="term" value="F:structural molecule activity"/>
    <property type="evidence" value="ECO:0007669"/>
    <property type="project" value="UniProtKB-UniRule"/>
</dbReference>
<dbReference type="GO" id="GO:0046718">
    <property type="term" value="P:symbiont entry into host cell"/>
    <property type="evidence" value="ECO:0007669"/>
    <property type="project" value="UniProtKB-KW"/>
</dbReference>
<dbReference type="GO" id="GO:0075732">
    <property type="term" value="P:viral penetration into host nucleus"/>
    <property type="evidence" value="ECO:0007669"/>
    <property type="project" value="UniProtKB-UniRule"/>
</dbReference>
<dbReference type="HAMAP" id="MF_04070">
    <property type="entry name" value="INFV_NCAP"/>
    <property type="match status" value="1"/>
</dbReference>
<dbReference type="InterPro" id="IPR002141">
    <property type="entry name" value="Flu_NP"/>
</dbReference>
<dbReference type="Pfam" id="PF00506">
    <property type="entry name" value="Flu_NP"/>
    <property type="match status" value="1"/>
</dbReference>
<dbReference type="SUPFAM" id="SSF161003">
    <property type="entry name" value="flu NP-like"/>
    <property type="match status" value="1"/>
</dbReference>
<keyword id="KW-0167">Capsid protein</keyword>
<keyword id="KW-1139">Helical capsid protein</keyword>
<keyword id="KW-1048">Host nucleus</keyword>
<keyword id="KW-0945">Host-virus interaction</keyword>
<keyword id="KW-0687">Ribonucleoprotein</keyword>
<keyword id="KW-0694">RNA-binding</keyword>
<keyword id="KW-0543">Viral nucleoprotein</keyword>
<keyword id="KW-1163">Viral penetration into host nucleus</keyword>
<keyword id="KW-0946">Virion</keyword>
<keyword id="KW-1160">Virus entry into host cell</keyword>
<reference key="1">
    <citation type="journal article" date="1990" name="J. Virol.">
        <title>Evolution of the nucleoprotein gene of influenza A virus.</title>
        <authorList>
            <person name="Gorman O.T."/>
            <person name="Bean W.J."/>
            <person name="Kawaoka Y."/>
            <person name="Webster R.G."/>
        </authorList>
    </citation>
    <scope>NUCLEOTIDE SEQUENCE [GENOMIC RNA]</scope>
</reference>
<reference key="2">
    <citation type="journal article" date="1990" name="Virology">
        <title>Derivation of the nucleoproteins (NP) of influenza A viruses isolated from marine mammals.</title>
        <authorList>
            <person name="Mandler J."/>
            <person name="Gorman O.T."/>
            <person name="Ludwig S."/>
            <person name="Schroeder E."/>
            <person name="Fitch W.M."/>
            <person name="Webster R.G."/>
            <person name="Scholtissek C."/>
        </authorList>
    </citation>
    <scope>NUCLEOTIDE SEQUENCE [GENOMIC RNA]</scope>
</reference>
<sequence>MASQGTKRSYEQMETGGERQNANEIRASVGRMVGGIGRFYIQMCTELKLSDNEGRLIQNSITIERMVLSAFDERRNKYLEEHPSTGRDPKKTGGPIYRRRDGKWVRELVLYDKEELRRIWRQANNGEDATAGLTHLMIWHSNLNDATYQRTRALVRTGMDPRMCSLMQGSTLPRRSGAAGAAVKGVGTMVMELIRMIKRGVNDRNFWRGENGRRTRIAYERMCNILKGKFQTAAQRAMMDQVRESRNPGNAEIEDLIFLARSALILRGAVAHKSCLPACVYGLAVASGYDFEREGYSLVGIDPFRLLQNSQVFSIIRPNENPAHKSQLVWMACHSAAFEDLRVSSFIRGTRVLPRGQLSTRGVQIASNENMETMNSSTLELRSRYWAIRTRSGGNTNQQRASAGQVSVQPTFSVQRNLPFERATIMAAFTGNPEGRTSDMRTEIIRMMENSRPEDVSFQGRGVFELSDEKATNPIVPSFDMSNEGSYFFGDNAEEYDN</sequence>
<gene>
    <name evidence="1" type="primary">NP</name>
</gene>
<proteinExistence type="inferred from homology"/>